<dbReference type="EMBL" id="AB012265">
    <property type="protein sequence ID" value="BAA32790.1"/>
    <property type="molecule type" value="mRNA"/>
</dbReference>
<dbReference type="EMBL" id="AB012266">
    <property type="protein sequence ID" value="BAA32791.1"/>
    <property type="molecule type" value="mRNA"/>
</dbReference>
<dbReference type="EMBL" id="AB255388">
    <property type="protein sequence ID" value="BAE93139.1"/>
    <property type="molecule type" value="mRNA"/>
</dbReference>
<dbReference type="EMBL" id="AK004274">
    <property type="protein sequence ID" value="BAB23245.1"/>
    <property type="molecule type" value="mRNA"/>
</dbReference>
<dbReference type="EMBL" id="AK133564">
    <property type="protein sequence ID" value="BAE21728.1"/>
    <property type="molecule type" value="mRNA"/>
</dbReference>
<dbReference type="EMBL" id="BC053035">
    <property type="protein sequence ID" value="AAH53035.1"/>
    <property type="molecule type" value="mRNA"/>
</dbReference>
<dbReference type="CCDS" id="CCDS28617.2">
    <molecule id="O88286-2"/>
</dbReference>
<dbReference type="PIR" id="T00247">
    <property type="entry name" value="T00247"/>
</dbReference>
<dbReference type="PIR" id="T00248">
    <property type="entry name" value="T00248"/>
</dbReference>
<dbReference type="RefSeq" id="NP_001359153.1">
    <molecule id="O88286-2"/>
    <property type="nucleotide sequence ID" value="NM_001372224.1"/>
</dbReference>
<dbReference type="RefSeq" id="NP_001397327.1">
    <molecule id="O88286-2"/>
    <property type="nucleotide sequence ID" value="NM_001410398.1"/>
</dbReference>
<dbReference type="RefSeq" id="NP_035847.2">
    <property type="nucleotide sequence ID" value="NM_011717.4"/>
</dbReference>
<dbReference type="RefSeq" id="NP_997603.3">
    <molecule id="O88286-2"/>
    <property type="nucleotide sequence ID" value="NM_212438.4"/>
</dbReference>
<dbReference type="RefSeq" id="XP_017172890.1">
    <property type="nucleotide sequence ID" value="XM_017317401.1"/>
</dbReference>
<dbReference type="BioGRID" id="204563">
    <property type="interactions" value="39"/>
</dbReference>
<dbReference type="FunCoup" id="O88286">
    <property type="interactions" value="2488"/>
</dbReference>
<dbReference type="IntAct" id="O88286">
    <property type="interactions" value="28"/>
</dbReference>
<dbReference type="MINT" id="O88286"/>
<dbReference type="STRING" id="10090.ENSMUSP00000069443"/>
<dbReference type="GlyGen" id="O88286">
    <property type="glycosylation" value="3 sites, 1 O-linked glycan (1 site)"/>
</dbReference>
<dbReference type="iPTMnet" id="O88286"/>
<dbReference type="PhosphoSitePlus" id="O88286"/>
<dbReference type="jPOST" id="O88286"/>
<dbReference type="PaxDb" id="10090-ENSMUSP00000069443"/>
<dbReference type="PeptideAtlas" id="O88286"/>
<dbReference type="ProteomicsDB" id="299982">
    <molecule id="O88286-1"/>
</dbReference>
<dbReference type="ProteomicsDB" id="299983">
    <molecule id="O88286-2"/>
</dbReference>
<dbReference type="ProteomicsDB" id="299984">
    <molecule id="O88286-3"/>
</dbReference>
<dbReference type="ProteomicsDB" id="299985">
    <molecule id="O88286-4"/>
</dbReference>
<dbReference type="Pumba" id="O88286"/>
<dbReference type="Antibodypedia" id="7541">
    <property type="antibodies" value="94 antibodies from 25 providers"/>
</dbReference>
<dbReference type="DNASU" id="22404"/>
<dbReference type="Ensembl" id="ENSMUST00000064694.14">
    <molecule id="O88286-2"/>
    <property type="protein sequence ID" value="ENSMUSP00000069443.8"/>
    <property type="gene ID" value="ENSMUSG00000024050.19"/>
</dbReference>
<dbReference type="GeneID" id="22404"/>
<dbReference type="KEGG" id="mmu:22404"/>
<dbReference type="UCSC" id="uc008bwn.2">
    <molecule id="O88286-2"/>
    <property type="organism name" value="mouse"/>
</dbReference>
<dbReference type="UCSC" id="uc008bwq.2">
    <molecule id="O88286-3"/>
    <property type="organism name" value="mouse"/>
</dbReference>
<dbReference type="UCSC" id="uc008bwt.2">
    <molecule id="O88286-4"/>
    <property type="organism name" value="mouse"/>
</dbReference>
<dbReference type="AGR" id="MGI:1332638"/>
<dbReference type="CTD" id="58525"/>
<dbReference type="MGI" id="MGI:1332638">
    <property type="gene designation" value="Wiz"/>
</dbReference>
<dbReference type="VEuPathDB" id="HostDB:ENSMUSG00000024050"/>
<dbReference type="eggNOG" id="KOG1721">
    <property type="taxonomic scope" value="Eukaryota"/>
</dbReference>
<dbReference type="GeneTree" id="ENSGT00940000159979"/>
<dbReference type="InParanoid" id="O88286"/>
<dbReference type="PhylomeDB" id="O88286"/>
<dbReference type="TreeFam" id="TF333705"/>
<dbReference type="BioGRID-ORCS" id="22404">
    <property type="hits" value="9 hits in 76 CRISPR screens"/>
</dbReference>
<dbReference type="ChiTaRS" id="Wiz">
    <property type="organism name" value="mouse"/>
</dbReference>
<dbReference type="PRO" id="PR:O88286"/>
<dbReference type="Proteomes" id="UP000000589">
    <property type="component" value="Chromosome 17"/>
</dbReference>
<dbReference type="RNAct" id="O88286">
    <property type="molecule type" value="protein"/>
</dbReference>
<dbReference type="Bgee" id="ENSMUSG00000024050">
    <property type="expression patterns" value="Expressed in embryonic brain and 240 other cell types or tissues"/>
</dbReference>
<dbReference type="ExpressionAtlas" id="O88286">
    <property type="expression patterns" value="baseline and differential"/>
</dbReference>
<dbReference type="GO" id="GO:0005634">
    <property type="term" value="C:nucleus"/>
    <property type="evidence" value="ECO:0000314"/>
    <property type="project" value="UniProtKB"/>
</dbReference>
<dbReference type="GO" id="GO:1990226">
    <property type="term" value="F:histone methyltransferase binding"/>
    <property type="evidence" value="ECO:0000353"/>
    <property type="project" value="UniProtKB"/>
</dbReference>
<dbReference type="GO" id="GO:0044877">
    <property type="term" value="F:protein-containing complex binding"/>
    <property type="evidence" value="ECO:0000314"/>
    <property type="project" value="UniProtKB"/>
</dbReference>
<dbReference type="GO" id="GO:0070984">
    <property type="term" value="F:SET domain binding"/>
    <property type="evidence" value="ECO:0000353"/>
    <property type="project" value="UniProtKB"/>
</dbReference>
<dbReference type="GO" id="GO:0008270">
    <property type="term" value="F:zinc ion binding"/>
    <property type="evidence" value="ECO:0007669"/>
    <property type="project" value="UniProtKB-KW"/>
</dbReference>
<dbReference type="GO" id="GO:0050821">
    <property type="term" value="P:protein stabilization"/>
    <property type="evidence" value="ECO:0000250"/>
    <property type="project" value="UniProtKB"/>
</dbReference>
<dbReference type="FunFam" id="3.30.160.60:FF:001682">
    <property type="entry name" value="protein Wiz isoform X1"/>
    <property type="match status" value="1"/>
</dbReference>
<dbReference type="Gene3D" id="3.30.160.60">
    <property type="entry name" value="Classic Zinc Finger"/>
    <property type="match status" value="2"/>
</dbReference>
<dbReference type="InterPro" id="IPR051643">
    <property type="entry name" value="Transcr_Reg_ZincFinger"/>
</dbReference>
<dbReference type="InterPro" id="IPR055125">
    <property type="entry name" value="Wiz_C_Znf"/>
</dbReference>
<dbReference type="InterPro" id="IPR036236">
    <property type="entry name" value="Znf_C2H2_sf"/>
</dbReference>
<dbReference type="InterPro" id="IPR013087">
    <property type="entry name" value="Znf_C2H2_type"/>
</dbReference>
<dbReference type="PANTHER" id="PTHR24396:SF22">
    <property type="entry name" value="PROTEIN WIZ"/>
    <property type="match status" value="1"/>
</dbReference>
<dbReference type="PANTHER" id="PTHR24396">
    <property type="entry name" value="ZINC FINGER PROTEIN"/>
    <property type="match status" value="1"/>
</dbReference>
<dbReference type="Pfam" id="PF23015">
    <property type="entry name" value="zf-WIZ"/>
    <property type="match status" value="1"/>
</dbReference>
<dbReference type="SMART" id="SM00355">
    <property type="entry name" value="ZnF_C2H2"/>
    <property type="match status" value="11"/>
</dbReference>
<dbReference type="SUPFAM" id="SSF57667">
    <property type="entry name" value="beta-beta-alpha zinc fingers"/>
    <property type="match status" value="3"/>
</dbReference>
<dbReference type="PROSITE" id="PS00028">
    <property type="entry name" value="ZINC_FINGER_C2H2_1"/>
    <property type="match status" value="8"/>
</dbReference>
<dbReference type="PROSITE" id="PS50157">
    <property type="entry name" value="ZINC_FINGER_C2H2_2"/>
    <property type="match status" value="7"/>
</dbReference>
<name>WIZ_MOUSE</name>
<keyword id="KW-0025">Alternative splicing</keyword>
<keyword id="KW-1017">Isopeptide bond</keyword>
<keyword id="KW-0479">Metal-binding</keyword>
<keyword id="KW-0488">Methylation</keyword>
<keyword id="KW-0539">Nucleus</keyword>
<keyword id="KW-0597">Phosphoprotein</keyword>
<keyword id="KW-1185">Reference proteome</keyword>
<keyword id="KW-0677">Repeat</keyword>
<keyword id="KW-0832">Ubl conjugation</keyword>
<keyword id="KW-0862">Zinc</keyword>
<keyword id="KW-0863">Zinc-finger</keyword>
<proteinExistence type="evidence at protein level"/>
<reference key="1">
    <citation type="journal article" date="1998" name="Brain Res. Mol. Brain Res.">
        <title>Molecular cloning and distinct developmental expression pattern of spliced forms of a novel zinc finger gene wiz in the mouse cerebellum.</title>
        <authorList>
            <person name="Matsumoto K."/>
            <person name="Ishii N."/>
            <person name="Yoshida S."/>
            <person name="Shiosaka S."/>
            <person name="Wanaka A."/>
            <person name="Tohyama M."/>
        </authorList>
    </citation>
    <scope>NUCLEOTIDE SEQUENCE [MRNA] (ISOFORMS L AND S)</scope>
    <scope>TISSUE SPECIFICITY</scope>
    <scope>DEVELOPMENTAL STAGE</scope>
    <source>
        <tissue>Brain</tissue>
    </source>
</reference>
<reference key="2">
    <citation type="journal article" date="2006" name="J. Biol. Chem.">
        <title>Zinc finger protein Wiz links G9a/GLP histone methyltransferases to the co-repressor molecule CtBP.</title>
        <authorList>
            <person name="Ueda J."/>
            <person name="Tachibana M."/>
            <person name="Ikura T."/>
            <person name="Shinkai Y."/>
        </authorList>
    </citation>
    <scope>NUCLEOTIDE SEQUENCE [MRNA] (ISOFORM S)</scope>
    <scope>FUNCTION</scope>
    <scope>TISSUE SPECIFICITY</scope>
    <scope>IDENTIFICATION BY MASS SPECTROMETRY</scope>
    <scope>INTERACTION WITH EHMT1; EHMT2; CTBP1 AND CTBP2</scope>
    <scope>SUBCELLULAR LOCATION</scope>
    <scope>MUTAGENESIS OF CYS-1631 AND HIS-1651</scope>
</reference>
<reference key="3">
    <citation type="journal article" date="2005" name="Science">
        <title>The transcriptional landscape of the mammalian genome.</title>
        <authorList>
            <person name="Carninci P."/>
            <person name="Kasukawa T."/>
            <person name="Katayama S."/>
            <person name="Gough J."/>
            <person name="Frith M.C."/>
            <person name="Maeda N."/>
            <person name="Oyama R."/>
            <person name="Ravasi T."/>
            <person name="Lenhard B."/>
            <person name="Wells C."/>
            <person name="Kodzius R."/>
            <person name="Shimokawa K."/>
            <person name="Bajic V.B."/>
            <person name="Brenner S.E."/>
            <person name="Batalov S."/>
            <person name="Forrest A.R."/>
            <person name="Zavolan M."/>
            <person name="Davis M.J."/>
            <person name="Wilming L.G."/>
            <person name="Aidinis V."/>
            <person name="Allen J.E."/>
            <person name="Ambesi-Impiombato A."/>
            <person name="Apweiler R."/>
            <person name="Aturaliya R.N."/>
            <person name="Bailey T.L."/>
            <person name="Bansal M."/>
            <person name="Baxter L."/>
            <person name="Beisel K.W."/>
            <person name="Bersano T."/>
            <person name="Bono H."/>
            <person name="Chalk A.M."/>
            <person name="Chiu K.P."/>
            <person name="Choudhary V."/>
            <person name="Christoffels A."/>
            <person name="Clutterbuck D.R."/>
            <person name="Crowe M.L."/>
            <person name="Dalla E."/>
            <person name="Dalrymple B.P."/>
            <person name="de Bono B."/>
            <person name="Della Gatta G."/>
            <person name="di Bernardo D."/>
            <person name="Down T."/>
            <person name="Engstrom P."/>
            <person name="Fagiolini M."/>
            <person name="Faulkner G."/>
            <person name="Fletcher C.F."/>
            <person name="Fukushima T."/>
            <person name="Furuno M."/>
            <person name="Futaki S."/>
            <person name="Gariboldi M."/>
            <person name="Georgii-Hemming P."/>
            <person name="Gingeras T.R."/>
            <person name="Gojobori T."/>
            <person name="Green R.E."/>
            <person name="Gustincich S."/>
            <person name="Harbers M."/>
            <person name="Hayashi Y."/>
            <person name="Hensch T.K."/>
            <person name="Hirokawa N."/>
            <person name="Hill D."/>
            <person name="Huminiecki L."/>
            <person name="Iacono M."/>
            <person name="Ikeo K."/>
            <person name="Iwama A."/>
            <person name="Ishikawa T."/>
            <person name="Jakt M."/>
            <person name="Kanapin A."/>
            <person name="Katoh M."/>
            <person name="Kawasawa Y."/>
            <person name="Kelso J."/>
            <person name="Kitamura H."/>
            <person name="Kitano H."/>
            <person name="Kollias G."/>
            <person name="Krishnan S.P."/>
            <person name="Kruger A."/>
            <person name="Kummerfeld S.K."/>
            <person name="Kurochkin I.V."/>
            <person name="Lareau L.F."/>
            <person name="Lazarevic D."/>
            <person name="Lipovich L."/>
            <person name="Liu J."/>
            <person name="Liuni S."/>
            <person name="McWilliam S."/>
            <person name="Madan Babu M."/>
            <person name="Madera M."/>
            <person name="Marchionni L."/>
            <person name="Matsuda H."/>
            <person name="Matsuzawa S."/>
            <person name="Miki H."/>
            <person name="Mignone F."/>
            <person name="Miyake S."/>
            <person name="Morris K."/>
            <person name="Mottagui-Tabar S."/>
            <person name="Mulder N."/>
            <person name="Nakano N."/>
            <person name="Nakauchi H."/>
            <person name="Ng P."/>
            <person name="Nilsson R."/>
            <person name="Nishiguchi S."/>
            <person name="Nishikawa S."/>
            <person name="Nori F."/>
            <person name="Ohara O."/>
            <person name="Okazaki Y."/>
            <person name="Orlando V."/>
            <person name="Pang K.C."/>
            <person name="Pavan W.J."/>
            <person name="Pavesi G."/>
            <person name="Pesole G."/>
            <person name="Petrovsky N."/>
            <person name="Piazza S."/>
            <person name="Reed J."/>
            <person name="Reid J.F."/>
            <person name="Ring B.Z."/>
            <person name="Ringwald M."/>
            <person name="Rost B."/>
            <person name="Ruan Y."/>
            <person name="Salzberg S.L."/>
            <person name="Sandelin A."/>
            <person name="Schneider C."/>
            <person name="Schoenbach C."/>
            <person name="Sekiguchi K."/>
            <person name="Semple C.A."/>
            <person name="Seno S."/>
            <person name="Sessa L."/>
            <person name="Sheng Y."/>
            <person name="Shibata Y."/>
            <person name="Shimada H."/>
            <person name="Shimada K."/>
            <person name="Silva D."/>
            <person name="Sinclair B."/>
            <person name="Sperling S."/>
            <person name="Stupka E."/>
            <person name="Sugiura K."/>
            <person name="Sultana R."/>
            <person name="Takenaka Y."/>
            <person name="Taki K."/>
            <person name="Tammoja K."/>
            <person name="Tan S.L."/>
            <person name="Tang S."/>
            <person name="Taylor M.S."/>
            <person name="Tegner J."/>
            <person name="Teichmann S.A."/>
            <person name="Ueda H.R."/>
            <person name="van Nimwegen E."/>
            <person name="Verardo R."/>
            <person name="Wei C.L."/>
            <person name="Yagi K."/>
            <person name="Yamanishi H."/>
            <person name="Zabarovsky E."/>
            <person name="Zhu S."/>
            <person name="Zimmer A."/>
            <person name="Hide W."/>
            <person name="Bult C."/>
            <person name="Grimmond S.M."/>
            <person name="Teasdale R.D."/>
            <person name="Liu E.T."/>
            <person name="Brusic V."/>
            <person name="Quackenbush J."/>
            <person name="Wahlestedt C."/>
            <person name="Mattick J.S."/>
            <person name="Hume D.A."/>
            <person name="Kai C."/>
            <person name="Sasaki D."/>
            <person name="Tomaru Y."/>
            <person name="Fukuda S."/>
            <person name="Kanamori-Katayama M."/>
            <person name="Suzuki M."/>
            <person name="Aoki J."/>
            <person name="Arakawa T."/>
            <person name="Iida J."/>
            <person name="Imamura K."/>
            <person name="Itoh M."/>
            <person name="Kato T."/>
            <person name="Kawaji H."/>
            <person name="Kawagashira N."/>
            <person name="Kawashima T."/>
            <person name="Kojima M."/>
            <person name="Kondo S."/>
            <person name="Konno H."/>
            <person name="Nakano K."/>
            <person name="Ninomiya N."/>
            <person name="Nishio T."/>
            <person name="Okada M."/>
            <person name="Plessy C."/>
            <person name="Shibata K."/>
            <person name="Shiraki T."/>
            <person name="Suzuki S."/>
            <person name="Tagami M."/>
            <person name="Waki K."/>
            <person name="Watahiki A."/>
            <person name="Okamura-Oho Y."/>
            <person name="Suzuki H."/>
            <person name="Kawai J."/>
            <person name="Hayashizaki Y."/>
        </authorList>
    </citation>
    <scope>NUCLEOTIDE SEQUENCE [LARGE SCALE MRNA] (ISOFORM 3)</scope>
    <scope>NUCLEOTIDE SEQUENCE [LARGE SCALE MRNA] OF 1525-1684 (ISOFORM L)</scope>
    <source>
        <strain>C57BL/6J</strain>
        <tissue>Embryo</tissue>
        <tissue>Pituitary</tissue>
    </source>
</reference>
<reference key="4">
    <citation type="journal article" date="2004" name="Genome Res.">
        <title>The status, quality, and expansion of the NIH full-length cDNA project: the Mammalian Gene Collection (MGC).</title>
        <authorList>
            <consortium name="The MGC Project Team"/>
        </authorList>
    </citation>
    <scope>NUCLEOTIDE SEQUENCE [LARGE SCALE MRNA] (ISOFORM 2)</scope>
    <source>
        <strain>C57BL/6J</strain>
        <tissue>Brain</tissue>
    </source>
</reference>
<reference key="5">
    <citation type="journal article" date="2002" name="Mamm. Genome">
        <title>Insertional polymorphisms of ETn retrotransposons include a disruption of the wiz gene in C57BL/6 mice.</title>
        <authorList>
            <person name="Baust C."/>
            <person name="Baillie G.J."/>
            <person name="Mager D.L."/>
        </authorList>
    </citation>
    <scope>POLYMORPHISM</scope>
</reference>
<reference key="6">
    <citation type="journal article" date="2007" name="Proc. Natl. Acad. Sci. U.S.A.">
        <title>Large-scale phosphorylation analysis of mouse liver.</title>
        <authorList>
            <person name="Villen J."/>
            <person name="Beausoleil S.A."/>
            <person name="Gerber S.A."/>
            <person name="Gygi S.P."/>
        </authorList>
    </citation>
    <scope>PHOSPHORYLATION [LARGE SCALE ANALYSIS] AT SER-1045 AND THR-1049</scope>
    <scope>IDENTIFICATION BY MASS SPECTROMETRY [LARGE SCALE ANALYSIS]</scope>
    <source>
        <tissue>Liver</tissue>
    </source>
</reference>
<reference key="7">
    <citation type="journal article" date="2010" name="Cell">
        <title>A tissue-specific atlas of mouse protein phosphorylation and expression.</title>
        <authorList>
            <person name="Huttlin E.L."/>
            <person name="Jedrychowski M.P."/>
            <person name="Elias J.E."/>
            <person name="Goswami T."/>
            <person name="Rad R."/>
            <person name="Beausoleil S.A."/>
            <person name="Villen J."/>
            <person name="Haas W."/>
            <person name="Sowa M.E."/>
            <person name="Gygi S.P."/>
        </authorList>
    </citation>
    <scope>PHOSPHORYLATION [LARGE SCALE ANALYSIS] AT SER-1039; SER-1045; THR-1049; SER-1050; SER-1179 AND SER-1184</scope>
    <scope>IDENTIFICATION BY MASS SPECTROMETRY [LARGE SCALE ANALYSIS]</scope>
    <source>
        <tissue>Brain</tissue>
        <tissue>Brown adipose tissue</tissue>
        <tissue>Kidney</tissue>
        <tissue>Liver</tissue>
        <tissue>Lung</tissue>
        <tissue>Pancreas</tissue>
        <tissue>Spleen</tissue>
        <tissue>Testis</tissue>
    </source>
</reference>
<protein>
    <recommendedName>
        <fullName>Protein Wiz</fullName>
    </recommendedName>
    <alternativeName>
        <fullName>Widely-interspaced zinc finger-containing protein</fullName>
    </alternativeName>
</protein>
<evidence type="ECO:0000250" key="1"/>
<evidence type="ECO:0000250" key="2">
    <source>
        <dbReference type="UniProtKB" id="O95785"/>
    </source>
</evidence>
<evidence type="ECO:0000255" key="3">
    <source>
        <dbReference type="PROSITE-ProRule" id="PRU00042"/>
    </source>
</evidence>
<evidence type="ECO:0000256" key="4">
    <source>
        <dbReference type="SAM" id="MobiDB-lite"/>
    </source>
</evidence>
<evidence type="ECO:0000269" key="5">
    <source>
    </source>
</evidence>
<evidence type="ECO:0000269" key="6">
    <source>
    </source>
</evidence>
<evidence type="ECO:0000269" key="7">
    <source>
    </source>
</evidence>
<evidence type="ECO:0000303" key="8">
    <source>
    </source>
</evidence>
<evidence type="ECO:0000303" key="9">
    <source>
    </source>
</evidence>
<evidence type="ECO:0000303" key="10">
    <source>
    </source>
</evidence>
<evidence type="ECO:0000303" key="11">
    <source>
    </source>
</evidence>
<evidence type="ECO:0000305" key="12"/>
<evidence type="ECO:0007744" key="13">
    <source>
    </source>
</evidence>
<evidence type="ECO:0007744" key="14">
    <source>
    </source>
</evidence>
<organism>
    <name type="scientific">Mus musculus</name>
    <name type="common">Mouse</name>
    <dbReference type="NCBI Taxonomy" id="10090"/>
    <lineage>
        <taxon>Eukaryota</taxon>
        <taxon>Metazoa</taxon>
        <taxon>Chordata</taxon>
        <taxon>Craniata</taxon>
        <taxon>Vertebrata</taxon>
        <taxon>Euteleostomi</taxon>
        <taxon>Mammalia</taxon>
        <taxon>Eutheria</taxon>
        <taxon>Euarchontoglires</taxon>
        <taxon>Glires</taxon>
        <taxon>Rodentia</taxon>
        <taxon>Myomorpha</taxon>
        <taxon>Muroidea</taxon>
        <taxon>Muridae</taxon>
        <taxon>Murinae</taxon>
        <taxon>Mus</taxon>
        <taxon>Mus</taxon>
    </lineage>
</organism>
<gene>
    <name type="primary">Wiz</name>
</gene>
<accession>O88286</accession>
<accession>O88287</accession>
<accession>Q1XG03</accession>
<accession>Q3UZX7</accession>
<accession>Q7TSJ4</accession>
<accession>Q9CT89</accession>
<sequence>MEGLLAGGLAAPDHPRGPAPREDIESGAEAAEGEGDIFPSSHYLPITKEGPRDILDGRSGISDGQPHPGLSEALPRATSATHRISSCYWDGDSLDFQPGSPPPHLLGPFPASLDVQGSWEHPMVQEAREGTPSEQRFKDSVIVRTMKPYAKLKGSRKFLHHQGEVKFLEKYSPSHHKFDWLQDTDEQGPLKDTGLHLDLPAQPPTVTSFRRVIVPVDNTPKTLDMEVMGTREDLEDFGQVAQPSEWGLHTSASEVATQTWTVNSEASVERLQPLLSPVQTGPYLCELLQEVAGGVDSNEEEEEEPAVFPCIECSIYFKHKEHLLEHMSQHRRAPGQEPPADLAPLACSECGWAFTEPTALEQHWQLHQASREKIIEEIQKLKQFPGDEGREARLQCSKCVFGTNSSRAFMQHAKLHVRGSLPSRQATEPFRGGSPVLDVSTLVYPSYGDSSGLNTCVHCGFTAPSKSLLREHTRLVHAHHAHWEEVGEAFEDLTSQPCTSQDAYTHSPDTATVDYFSKSEPLLASVWQENPSGYDPDLAFGPDYQQPGMRNFPLLNSGQQSLGKLAFPSPMASASYSIQRNRNKSTVHLQRMEDKSHLWSEEEEEEDEDVVLTSERDFTPENGAFPPLAIPSLIPQPALELKQTFQDALQAVDASETQQQQLQGMVPIVLMAKLRPQVIAATTRASPQLPPEEPELRSTHPLDFLLLDAPLGGSLGLNTLLEGDPAMALKHEERKCPYCPDRFHYGIGLANHVRGHLNRVGVSYNVRHFISAEEVKAIERRFSFQKKKKKVANFDPGTFSLMRCDFCGAGFDTRAGLSSHARAHLRDFGITNWELTISPINILQELLATSAAELPPSPLGREPGGPPRSFLTSRRPRLPLTMPFPPTWAEDPGPIYGDAQSLTTCEVCGACFETRKGLSSHARSHLRQLGVAESESSGAPIDLLYELVKQKGLPDAPLGLTPSLTKKSNSPKEFLAGAARPGLLTLAKPMDAPAVNKAIKSPPGFSAKGLTHPSSSPLLKKAPLTLAGSPTPKNPEDKSPQLSLSPRPTSPKAQWPQSEDEGPLNLTSGPEPTRDIRCEFCGEFFENRKGLSSHARSHLRQMGVTEWYVNGSPIDTLREILKRRTQSRPGGHLHPPGPSPKALAKVLSTGGPGSSLEARSPSDLHISPLTKKLPPPPGSPLGHSPTASPPPTARKMFSGLATPSLPKKLKPEHMRVEIKREMLPGTLHGEPHPSEGPWGTPREDMAPLNLSARAEPVRDIRCEFCGEFFENRKGLSSHARSHLRQMGVTEWSVNGSPIDTLREILKKKSKLCLIKKEPPAGDLAPALTEDGSPTAAPGALHSPLPLSPLASRPGKPGAGPTQVPRELSLSPITGSKPSAASYLGPVATKRPLQEDRFLPAEVKAKTYIQTELPFKAKTLHEKTSHSSTEACCELCGLYFENRKALASHARAHLRQFGVTEWCVNGSPIETLSEWIKHRPQKVGAYRSYIQGGRPFTKKFRSAGHGRDSDKRPPLGLAPGGLSLVGRSAGGEPGLEAGRAADSGERPLATSPPGTVKSEEHQRQNINKFERRQARPSDASAARGGEEVNDLQQKLEEVRQPPPRVRPVPSLVPRPPQTSLVKFVGNIYTLKCRFCEVEFQGPLSIQEEWVRHLQRHILEMNFSKADPPPEEPQAPQAQTAAVEAP</sequence>
<feature type="chain" id="PRO_0000286055" description="Protein Wiz">
    <location>
        <begin position="1"/>
        <end position="1684"/>
    </location>
</feature>
<feature type="zinc finger region" description="C2H2-type 1" evidence="3">
    <location>
        <begin position="308"/>
        <end position="330"/>
    </location>
</feature>
<feature type="zinc finger region" description="C2H2-type 2" evidence="3">
    <location>
        <begin position="345"/>
        <end position="367"/>
    </location>
</feature>
<feature type="zinc finger region" description="C2H2-type 3" evidence="3">
    <location>
        <begin position="454"/>
        <end position="477"/>
    </location>
</feature>
<feature type="zinc finger region" description="C2H2-type 4" evidence="3">
    <location>
        <begin position="734"/>
        <end position="756"/>
    </location>
</feature>
<feature type="zinc finger region" description="C2H2-type 5" evidence="3">
    <location>
        <begin position="802"/>
        <end position="824"/>
    </location>
</feature>
<feature type="zinc finger region" description="C2H2-type 6" evidence="3">
    <location>
        <begin position="903"/>
        <end position="925"/>
    </location>
</feature>
<feature type="zinc finger region" description="C2H2-type 7" evidence="3">
    <location>
        <begin position="1076"/>
        <end position="1098"/>
    </location>
</feature>
<feature type="zinc finger region" description="C2H2-type 8" evidence="3">
    <location>
        <begin position="1260"/>
        <end position="1282"/>
    </location>
</feature>
<feature type="zinc finger region" description="C2H2-type 9" evidence="3">
    <location>
        <begin position="1430"/>
        <end position="1452"/>
    </location>
</feature>
<feature type="zinc finger region" description="C2H2-type 10" evidence="3">
    <location>
        <begin position="1629"/>
        <end position="1655"/>
    </location>
</feature>
<feature type="region of interest" description="Disordered" evidence="4">
    <location>
        <begin position="1"/>
        <end position="77"/>
    </location>
</feature>
<feature type="region of interest" description="Disordered" evidence="4">
    <location>
        <begin position="854"/>
        <end position="876"/>
    </location>
</feature>
<feature type="region of interest" description="Disordered" evidence="4">
    <location>
        <begin position="1005"/>
        <end position="1072"/>
    </location>
</feature>
<feature type="region of interest" description="Interaction with CTBP1 and CTBP2 1" evidence="6">
    <location>
        <begin position="1063"/>
        <end position="1067"/>
    </location>
</feature>
<feature type="region of interest" description="Disordered" evidence="4">
    <location>
        <begin position="1127"/>
        <end position="1208"/>
    </location>
</feature>
<feature type="region of interest" description="Interaction with CTBP1 and CTBP2 2" evidence="6">
    <location>
        <begin position="1247"/>
        <end position="1251"/>
    </location>
</feature>
<feature type="region of interest" description="Disordered" evidence="4">
    <location>
        <begin position="1320"/>
        <end position="1384"/>
    </location>
</feature>
<feature type="region of interest" description="Disordered" evidence="4">
    <location>
        <begin position="1496"/>
        <end position="1587"/>
    </location>
</feature>
<feature type="region of interest" description="Disordered" evidence="4">
    <location>
        <begin position="1592"/>
        <end position="1611"/>
    </location>
</feature>
<feature type="region of interest" description="Disordered" evidence="4">
    <location>
        <begin position="1662"/>
        <end position="1684"/>
    </location>
</feature>
<feature type="compositionally biased region" description="Basic and acidic residues" evidence="4">
    <location>
        <begin position="13"/>
        <end position="24"/>
    </location>
</feature>
<feature type="compositionally biased region" description="Polar residues" evidence="4">
    <location>
        <begin position="1040"/>
        <end position="1057"/>
    </location>
</feature>
<feature type="compositionally biased region" description="Low complexity" evidence="4">
    <location>
        <begin position="1335"/>
        <end position="1351"/>
    </location>
</feature>
<feature type="compositionally biased region" description="Basic and acidic residues" evidence="4">
    <location>
        <begin position="1556"/>
        <end position="1574"/>
    </location>
</feature>
<feature type="compositionally biased region" description="Pro residues" evidence="4">
    <location>
        <begin position="1599"/>
        <end position="1611"/>
    </location>
</feature>
<feature type="compositionally biased region" description="Low complexity" evidence="4">
    <location>
        <begin position="1672"/>
        <end position="1684"/>
    </location>
</feature>
<feature type="modified residue" description="Phosphoserine" evidence="2">
    <location>
        <position position="1029"/>
    </location>
</feature>
<feature type="modified residue" description="Phosphothreonine" evidence="2">
    <location>
        <position position="1031"/>
    </location>
</feature>
<feature type="modified residue" description="Phosphoserine" evidence="14">
    <location>
        <position position="1039"/>
    </location>
</feature>
<feature type="modified residue" description="Phosphoserine" evidence="13 14">
    <location>
        <position position="1045"/>
    </location>
</feature>
<feature type="modified residue" description="Phosphothreonine" evidence="13 14">
    <location>
        <position position="1049"/>
    </location>
</feature>
<feature type="modified residue" description="Phosphoserine" evidence="14">
    <location>
        <position position="1050"/>
    </location>
</feature>
<feature type="modified residue" description="Phosphoserine" evidence="2">
    <location>
        <position position="1058"/>
    </location>
</feature>
<feature type="modified residue" description="Phosphoserine" evidence="2">
    <location>
        <position position="1112"/>
    </location>
</feature>
<feature type="modified residue" description="Phosphoserine" evidence="2">
    <location>
        <position position="1139"/>
    </location>
</feature>
<feature type="modified residue" description="Phosphoserine" evidence="2">
    <location>
        <position position="1155"/>
    </location>
</feature>
<feature type="modified residue" description="Phosphoserine" evidence="2">
    <location>
        <position position="1160"/>
    </location>
</feature>
<feature type="modified residue" description="Phosphoserine" evidence="2">
    <location>
        <position position="1167"/>
    </location>
</feature>
<feature type="modified residue" description="Phosphoserine" evidence="14">
    <location>
        <position position="1179"/>
    </location>
</feature>
<feature type="modified residue" description="Phosphoserine" evidence="14">
    <location>
        <position position="1184"/>
    </location>
</feature>
<feature type="modified residue" description="N6,N6,N6-trimethyllysine; by EHMT2; alternate" evidence="2">
    <location>
        <position position="1195"/>
    </location>
</feature>
<feature type="modified residue" description="N6,N6-dimethyllysine; by EHMT2; alternate" evidence="2">
    <location>
        <position position="1195"/>
    </location>
</feature>
<feature type="modified residue" description="Phosphoserine" evidence="2">
    <location>
        <position position="1296"/>
    </location>
</feature>
<feature type="modified residue" description="Phosphoserine" evidence="2">
    <location>
        <position position="1342"/>
    </location>
</feature>
<feature type="modified residue" description="Phosphoserine" evidence="2">
    <location>
        <position position="1347"/>
    </location>
</feature>
<feature type="modified residue" description="Phosphoserine" evidence="2">
    <location>
        <position position="1550"/>
    </location>
</feature>
<feature type="cross-link" description="Glycyl lysine isopeptide (Lys-Gly) (interchain with G-Cter in SUMO2)" evidence="2">
    <location>
        <position position="916"/>
    </location>
</feature>
<feature type="cross-link" description="Glycyl lysine isopeptide (Lys-Gly) (interchain with G-Cter in SUMO2)" evidence="2">
    <location>
        <position position="972"/>
    </location>
</feature>
<feature type="cross-link" description="Glycyl lysine isopeptide (Lys-Gly) (interchain with G-Cter in SUMO2)" evidence="2">
    <location>
        <position position="988"/>
    </location>
</feature>
<feature type="cross-link" description="Glycyl lysine isopeptide (Lys-Gly) (interchain with G-Cter in SUMO2)" evidence="2">
    <location>
        <position position="1000"/>
    </location>
</feature>
<feature type="cross-link" description="Glycyl lysine isopeptide (Lys-Gly) (interchain with G-Cter in SUMO2)" evidence="2">
    <location>
        <position position="1021"/>
    </location>
</feature>
<feature type="cross-link" description="Glycyl lysine isopeptide (Lys-Gly) (interchain with G-Cter in SUMO2)" evidence="2">
    <location>
        <position position="1033"/>
    </location>
</feature>
<feature type="cross-link" description="Glycyl lysine isopeptide (Lys-Gly) (interchain with G-Cter in SUMO2)" evidence="2">
    <location>
        <position position="1038"/>
    </location>
</feature>
<feature type="cross-link" description="Glycyl lysine isopeptide (Lys-Gly) (interchain with G-Cter in SUMO2)" evidence="2">
    <location>
        <position position="1089"/>
    </location>
</feature>
<feature type="cross-link" description="Glycyl lysine isopeptide (Lys-Gly) (interchain with G-Cter in SUMO2)" evidence="2">
    <location>
        <position position="1141"/>
    </location>
</feature>
<feature type="cross-link" description="Glycyl lysine isopeptide (Lys-Gly) (interchain with G-Cter in SUMO2)" evidence="2">
    <location>
        <position position="1145"/>
    </location>
</feature>
<feature type="cross-link" description="Glycyl lysine isopeptide (Lys-Gly) (interchain with G-Cter in SUMO2)" evidence="2">
    <location>
        <position position="1171"/>
    </location>
</feature>
<feature type="cross-link" description="Glycyl lysine isopeptide (Lys-Gly) (interchain with G-Cter in SUMO2)" evidence="2">
    <location>
        <position position="1172"/>
    </location>
</feature>
<feature type="cross-link" description="Glycyl lysine isopeptide (Lys-Gly) (interchain with G-Cter in SUMO2)" evidence="2">
    <location>
        <position position="1210"/>
    </location>
</feature>
<feature type="cross-link" description="Glycyl lysine isopeptide (Lys-Gly) (interchain with G-Cter in SUMO2)" evidence="2">
    <location>
        <position position="1273"/>
    </location>
</feature>
<feature type="cross-link" description="Glycyl lysine isopeptide (Lys-Gly) (interchain with G-Cter in SUMO2)" evidence="2">
    <location>
        <position position="1315"/>
    </location>
</feature>
<feature type="cross-link" description="Glycyl lysine isopeptide (Lys-Gly) (interchain with G-Cter in SUMO2)" evidence="2">
    <location>
        <position position="1376"/>
    </location>
</feature>
<feature type="cross-link" description="Glycyl lysine isopeptide (Lys-Gly) (interchain with G-Cter in SUMO2)" evidence="2">
    <location>
        <position position="1389"/>
    </location>
</feature>
<feature type="cross-link" description="Glycyl lysine isopeptide (Lys-Gly) (interchain with G-Cter in SUMO2)" evidence="2">
    <location>
        <position position="1403"/>
    </location>
</feature>
<feature type="cross-link" description="Glycyl lysine isopeptide (Lys-Gly) (interchain with G-Cter in SUMO2)" evidence="2">
    <location>
        <position position="1405"/>
    </location>
</feature>
<feature type="cross-link" description="Glycyl lysine isopeptide (Lys-Gly) (interchain with G-Cter in SUMO2)" evidence="2">
    <location>
        <position position="1415"/>
    </location>
</feature>
<feature type="cross-link" description="Glycyl lysine isopeptide (Lys-Gly) (interchain with G-Cter in SUMO2)" evidence="2">
    <location>
        <position position="1481"/>
    </location>
</feature>
<feature type="cross-link" description="Glycyl lysine isopeptide (Lys-Gly) (interchain with G-Cter in SUMO2)" evidence="2">
    <location>
        <position position="1497"/>
    </location>
</feature>
<feature type="cross-link" description="Glycyl lysine isopeptide (Lys-Gly) (interchain with G-Cter in SUMO2)" evidence="2">
    <location>
        <position position="1510"/>
    </location>
</feature>
<feature type="cross-link" description="Glycyl lysine isopeptide (Lys-Gly) (interchain with G-Cter in SUMO1); alternate" evidence="2">
    <location>
        <position position="1556"/>
    </location>
</feature>
<feature type="cross-link" description="Glycyl lysine isopeptide (Lys-Gly) (interchain with G-Cter in SUMO2); alternate" evidence="2">
    <location>
        <position position="1556"/>
    </location>
</feature>
<feature type="cross-link" description="Glycyl lysine isopeptide (Lys-Gly) (interchain with G-Cter in SUMO2)" evidence="2">
    <location>
        <position position="1567"/>
    </location>
</feature>
<feature type="cross-link" description="Glycyl lysine isopeptide (Lys-Gly) (interchain with G-Cter in SUMO2)" evidence="2">
    <location>
        <position position="1593"/>
    </location>
</feature>
<feature type="cross-link" description="Glycyl lysine isopeptide (Lys-Gly) (interchain with G-Cter in SUMO2)" evidence="2">
    <location>
        <position position="1663"/>
    </location>
</feature>
<feature type="splice variant" id="VSP_024953" description="In isoform 2." evidence="8">
    <location>
        <begin position="1"/>
        <end position="759"/>
    </location>
</feature>
<feature type="splice variant" id="VSP_024954" description="In isoform S." evidence="10 11">
    <location>
        <begin position="63"/>
        <end position="790"/>
    </location>
</feature>
<feature type="splice variant" id="VSP_024955" description="In isoform 3." evidence="9">
    <original>YGIGLANHVRGHLNRVGVSYNVRHFISAEEVKAIERRFSFQKKKKKVANFDPGT</original>
    <variation>NGIVLRPPAARNVNGSTEKAARAVREESRRGKRRNVAKTVTLIKAQILLLRHQL</variation>
    <location>
        <begin position="745"/>
        <end position="798"/>
    </location>
</feature>
<feature type="splice variant" id="VSP_024956" description="In isoform 2." evidence="8">
    <original>VGVSYNVRHFISAEEVKAIERRFSFQKKKK</original>
    <variation>MAEVAFLMGSPILASAKPSPVPPPPPIGSA</variation>
    <location>
        <begin position="760"/>
        <end position="789"/>
    </location>
</feature>
<feature type="splice variant" id="VSP_024957" description="In isoform 3." evidence="9">
    <location>
        <begin position="799"/>
        <end position="1684"/>
    </location>
</feature>
<feature type="splice variant" id="VSP_024958" description="In isoform 2." evidence="8">
    <original>D</original>
    <variation>DGLCSEENTMVAMDLGSPLLPKKSLPVSGTLEQVASRLSSKVAAEVPHGSKQELPDLK</variation>
    <location>
        <position position="898"/>
    </location>
</feature>
<feature type="mutagenesis site" description="Impairs interaction with EHMT1 and EHMT2." evidence="6">
    <original>C</original>
    <variation>A</variation>
    <location>
        <position position="1631"/>
    </location>
</feature>
<feature type="mutagenesis site" description="Impairs interaction with EHMT1 and EHMT2." evidence="6">
    <original>H</original>
    <variation>A</variation>
    <location>
        <position position="1651"/>
    </location>
</feature>
<feature type="sequence conflict" description="In Ref. 1; BAA32790." evidence="12" ref="1">
    <original>D</original>
    <variation>G</variation>
    <location>
        <position position="492"/>
    </location>
</feature>
<feature type="sequence conflict" description="In Ref. 1; BAA32790/BAA32791." evidence="12" ref="1">
    <original>R</original>
    <variation>G</variation>
    <location>
        <position position="868"/>
    </location>
</feature>
<feature type="sequence conflict" description="In Ref. 3; AAH53035." evidence="12" ref="3">
    <original>K</original>
    <variation>N</variation>
    <location>
        <position position="1020"/>
    </location>
</feature>
<feature type="sequence conflict" description="In Ref. 1; BAA32790/BAA32791." evidence="12" ref="1">
    <original>K</original>
    <variation>R</variation>
    <location>
        <position position="1052"/>
    </location>
</feature>
<feature type="sequence conflict" description="In Ref. 1; BAA32790/BAA32791." evidence="12" ref="1">
    <original>W</original>
    <variation>C</variation>
    <location>
        <position position="1055"/>
    </location>
</feature>
<feature type="sequence conflict" description="In Ref. 1; BAA32790/BAA32791." evidence="12" ref="1">
    <location>
        <position position="1252"/>
    </location>
</feature>
<comment type="function">
    <text evidence="6">May link EHMT1 and EHMT2 histone methyltransferases to the CTBP corepressor machinery. May be involved in EHMT1-EHMT2 heterodimer formation and stabilization.</text>
</comment>
<comment type="subunit">
    <text evidence="1 6">Part of a complex containing at least CDYL, REST, WIZ, SETB1, EHMT1 and EHMT2 (By similarity). Interacts with EHMT1, EHMT2, CTBP1 and CTBP2.</text>
</comment>
<comment type="subcellular location">
    <subcellularLocation>
        <location evidence="6">Nucleus</location>
    </subcellularLocation>
</comment>
<comment type="alternative products">
    <event type="alternative splicing"/>
    <isoform>
        <id>O88286-1</id>
        <name>L</name>
        <sequence type="displayed"/>
    </isoform>
    <isoform>
        <id>O88286-2</id>
        <name>S</name>
        <sequence type="described" ref="VSP_024954"/>
    </isoform>
    <isoform>
        <id>O88286-3</id>
        <name>2</name>
        <sequence type="described" ref="VSP_024953 VSP_024956 VSP_024958"/>
    </isoform>
    <isoform>
        <id>O88286-4</id>
        <name>3</name>
        <sequence type="described" ref="VSP_024955 VSP_024957"/>
    </isoform>
</comment>
<comment type="tissue specificity">
    <text evidence="6 7">According to PubMed:9795207, isoform L and isoform S are brain-specific. According to PubMed:16702210, isoform S is ubiquitously expressed.</text>
</comment>
<comment type="developmental stage">
    <text evidence="7">Isoform L and isoform S are expressed in brain from 14 dpc to adulthood, with highest levels in the perinatal period. At embryonic stages, isoform L seems to be excluded from cerebellum.</text>
</comment>
<comment type="domain">
    <text>The C2H2-type zinc finger 10 mediates interaction with EHMT1 and EHMT2.</text>
</comment>
<comment type="polymorphism">
    <text evidence="5">C57BL/6J and C57BR/cdJ mice specifically present an insertion of a type II early transposon in the opposite orientation into exon 6. This results in a strong reduction in the protein levels of isoform L.</text>
</comment>
<comment type="similarity">
    <text evidence="12">Belongs to the krueppel C2H2-type zinc-finger protein family.</text>
</comment>